<dbReference type="EMBL" id="AH001271">
    <property type="protein sequence ID" value="AAA31966.2"/>
    <property type="status" value="ALT_FRAME"/>
    <property type="molecule type" value="Genomic_DNA"/>
</dbReference>
<dbReference type="EMBL" id="KC683708">
    <property type="protein sequence ID" value="AGG15994.1"/>
    <property type="molecule type" value="Genomic_DNA"/>
</dbReference>
<dbReference type="EMBL" id="AF275270">
    <property type="protein sequence ID" value="AAG10293.1"/>
    <property type="molecule type" value="Genomic_DNA"/>
</dbReference>
<dbReference type="PIR" id="A19079">
    <property type="entry name" value="A19079"/>
</dbReference>
<dbReference type="RefSeq" id="YP_009126706.1">
    <property type="nucleotide sequence ID" value="NC_026614.1"/>
</dbReference>
<dbReference type="PDB" id="6YW5">
    <property type="method" value="EM"/>
    <property type="resolution" value="2.85 A"/>
    <property type="chains" value="CC=1-508"/>
</dbReference>
<dbReference type="PDB" id="6YWX">
    <property type="method" value="EM"/>
    <property type="resolution" value="3.10 A"/>
    <property type="chains" value="CC=1-508"/>
</dbReference>
<dbReference type="PDBsum" id="6YW5"/>
<dbReference type="PDBsum" id="6YWX"/>
<dbReference type="EMDB" id="EMD-10958"/>
<dbReference type="EMDB" id="EMD-10978"/>
<dbReference type="SMR" id="P23351"/>
<dbReference type="STRING" id="367110.P23351"/>
<dbReference type="EnsemblFungi" id="AGG15994">
    <property type="protein sequence ID" value="AGG15994"/>
    <property type="gene ID" value="NCU16005"/>
</dbReference>
<dbReference type="GeneID" id="23681546"/>
<dbReference type="KEGG" id="ncr:NCU16005"/>
<dbReference type="VEuPathDB" id="FungiDB:NCU16005"/>
<dbReference type="InParanoid" id="P23351"/>
<dbReference type="OrthoDB" id="4360278at2759"/>
<dbReference type="Proteomes" id="UP000001805">
    <property type="component" value="Mitochondrion"/>
</dbReference>
<dbReference type="GO" id="GO:0005739">
    <property type="term" value="C:mitochondrion"/>
    <property type="evidence" value="ECO:0007669"/>
    <property type="project" value="UniProtKB-SubCell"/>
</dbReference>
<dbReference type="GO" id="GO:1990904">
    <property type="term" value="C:ribonucleoprotein complex"/>
    <property type="evidence" value="ECO:0007669"/>
    <property type="project" value="UniProtKB-KW"/>
</dbReference>
<dbReference type="GO" id="GO:0005840">
    <property type="term" value="C:ribosome"/>
    <property type="evidence" value="ECO:0007669"/>
    <property type="project" value="UniProtKB-KW"/>
</dbReference>
<proteinExistence type="evidence at protein level"/>
<evidence type="ECO:0000250" key="1">
    <source>
        <dbReference type="UniProtKB" id="P02381"/>
    </source>
</evidence>
<evidence type="ECO:0000269" key="2">
    <source>
    </source>
</evidence>
<evidence type="ECO:0000303" key="3">
    <source>
    </source>
</evidence>
<evidence type="ECO:0000305" key="4"/>
<evidence type="ECO:0000305" key="5">
    <source>
    </source>
</evidence>
<evidence type="ECO:0007744" key="6">
    <source>
        <dbReference type="PDB" id="6YW5"/>
    </source>
</evidence>
<evidence type="ECO:0007744" key="7">
    <source>
        <dbReference type="PDB" id="6YWX"/>
    </source>
</evidence>
<reference key="1">
    <citation type="journal article" date="1982" name="Cell">
        <title>Intron within the large rRNA gene of N. crassa mitochondria: a long open reading frame and a consensus sequence possibly important in splicing.</title>
        <authorList>
            <person name="Burke J.M."/>
            <person name="RajBhandary U.L."/>
        </authorList>
    </citation>
    <scope>NUCLEOTIDE SEQUENCE [GENOMIC DNA]</scope>
</reference>
<reference key="2">
    <citation type="journal article" date="2003" name="Nature">
        <title>The genome sequence of the filamentous fungus Neurospora crassa.</title>
        <authorList>
            <person name="Galagan J.E."/>
            <person name="Calvo S.E."/>
            <person name="Borkovich K.A."/>
            <person name="Selker E.U."/>
            <person name="Read N.D."/>
            <person name="Jaffe D.B."/>
            <person name="FitzHugh W."/>
            <person name="Ma L.-J."/>
            <person name="Smirnov S."/>
            <person name="Purcell S."/>
            <person name="Rehman B."/>
            <person name="Elkins T."/>
            <person name="Engels R."/>
            <person name="Wang S."/>
            <person name="Nielsen C.B."/>
            <person name="Butler J."/>
            <person name="Endrizzi M."/>
            <person name="Qui D."/>
            <person name="Ianakiev P."/>
            <person name="Bell-Pedersen D."/>
            <person name="Nelson M.A."/>
            <person name="Werner-Washburne M."/>
            <person name="Selitrennikoff C.P."/>
            <person name="Kinsey J.A."/>
            <person name="Braun E.L."/>
            <person name="Zelter A."/>
            <person name="Schulte U."/>
            <person name="Kothe G.O."/>
            <person name="Jedd G."/>
            <person name="Mewes H.-W."/>
            <person name="Staben C."/>
            <person name="Marcotte E."/>
            <person name="Greenberg D."/>
            <person name="Roy A."/>
            <person name="Foley K."/>
            <person name="Naylor J."/>
            <person name="Stange-Thomann N."/>
            <person name="Barrett R."/>
            <person name="Gnerre S."/>
            <person name="Kamal M."/>
            <person name="Kamvysselis M."/>
            <person name="Mauceli E.W."/>
            <person name="Bielke C."/>
            <person name="Rudd S."/>
            <person name="Frishman D."/>
            <person name="Krystofova S."/>
            <person name="Rasmussen C."/>
            <person name="Metzenberg R.L."/>
            <person name="Perkins D.D."/>
            <person name="Kroken S."/>
            <person name="Cogoni C."/>
            <person name="Macino G."/>
            <person name="Catcheside D.E.A."/>
            <person name="Li W."/>
            <person name="Pratt R.J."/>
            <person name="Osmani S.A."/>
            <person name="DeSouza C.P.C."/>
            <person name="Glass N.L."/>
            <person name="Orbach M.J."/>
            <person name="Berglund J.A."/>
            <person name="Voelker R."/>
            <person name="Yarden O."/>
            <person name="Plamann M."/>
            <person name="Seiler S."/>
            <person name="Dunlap J.C."/>
            <person name="Radford A."/>
            <person name="Aramayo R."/>
            <person name="Natvig D.O."/>
            <person name="Alex L.A."/>
            <person name="Mannhaupt G."/>
            <person name="Ebbole D.J."/>
            <person name="Freitag M."/>
            <person name="Paulsen I."/>
            <person name="Sachs M.S."/>
            <person name="Lander E.S."/>
            <person name="Nusbaum C."/>
            <person name="Birren B.W."/>
        </authorList>
    </citation>
    <scope>NUCLEOTIDE SEQUENCE [LARGE SCALE GENOMIC DNA]</scope>
    <source>
        <strain>ATCC 24698 / 74-OR23-1A / CBS 708.71 / DSM 1257 / FGSC 987</strain>
    </source>
</reference>
<reference key="3">
    <citation type="book" date="2004" name="The Mycota II, Genetics and Biotechnology (2nd edition)">
        <title>Mitochondrial genetics of Neurospora.</title>
        <editorList>
            <person name="Kueck U."/>
        </editorList>
        <authorList>
            <person name="Kennell J.C."/>
            <person name="Collins R.A."/>
            <person name="Griffiths A.J.F."/>
            <person name="Nargang F.E."/>
        </authorList>
    </citation>
    <scope>GENOME REANNOTATION</scope>
    <source>
        <strain>ATCC 24698 / 74-OR23-1A / CBS 708.71 / DSM 1257 / FGSC 987</strain>
    </source>
</reference>
<reference key="4">
    <citation type="journal article" date="2000" name="Trends Biochem. Sci.">
        <title>A novel motif for identifying rps3 homologs in fungal mitochondrial genomes.</title>
        <authorList>
            <person name="Bullerwell C.E."/>
            <person name="Burger G."/>
            <person name="Lang B.F."/>
        </authorList>
    </citation>
    <scope>NUCLEOTIDE SEQUENCE [GENOMIC DNA] OF 284-508</scope>
    <source>
        <strain>ATCC 24698 / 74-OR23-1A / CBS 708.71 / DSM 1257 / FGSC 987</strain>
    </source>
</reference>
<reference evidence="6 7" key="5">
    <citation type="journal article" date="2020" name="Nat. Commun.">
        <title>Analysis of translating mitoribosome reveals functional characteristics of translation in mitochondria of fungi.</title>
        <authorList>
            <person name="Itoh Y."/>
            <person name="Naschberger A."/>
            <person name="Mortezaei N."/>
            <person name="Herrmann J.M."/>
            <person name="Amunts A."/>
        </authorList>
    </citation>
    <scope>STRUCTURE BY ELECTRON MICROSCOPY (2.85 ANGSTROMS)</scope>
</reference>
<geneLocation type="mitochondrion"/>
<sequence>MNNTNTNTNNKNLASSSASVIFSKYINNNNNKLIPFKIKNSDLGRTRYFPPISKEWKNSIYVFNHNNLKNLPLFDININSLIKDYFNLQFKDKILFKKKRLSKVKVVSLNKIYASKAEIKHTNTKAILTVYTFNREKISLYKKIKKLKKSFYFVFDKIISFSERVILSGVPIRVDKDGKVLSNLYLPFRLRGVLPWITESHVNIWRKIIIASLYKELILLRKYKLRLDLNKYKFEEKLLYRLNNLIMKYYNKKVEFNIVNMRSFLLNSDILTKILALKLKNRNARVIKIMDVILNKANLPKINRVQEKASLIKSVDWNLLENKFKNLNLSFILNDASYAERNNLSELLNKLYYNVLLVSQKGVWALRSPKGEQPSFHSKSGGSPTKFIQKGAGAASLGGNAKAQPKVSSFAKAKKYAKIYQIIFNSINYKNMGGLRLEIKGRLTKRYRADRSLFKVKWKGGLKNLDSSYKGLSSVNMRGYAKPNVEYSIFTSKRRIGAFAVKGWVSGK</sequence>
<feature type="chain" id="PRO_0000220078" description="Small ribosomal subunit protein uS3m">
    <location>
        <begin position="1"/>
        <end position="508"/>
    </location>
</feature>
<feature type="sequence conflict" description="In Ref. 1; AAA31966." evidence="4" ref="1">
    <original>L</original>
    <variation>P</variation>
    <location>
        <position position="229"/>
    </location>
</feature>
<feature type="sequence conflict" description="In Ref. 1; AAA31966." evidence="4" ref="1">
    <original>R</original>
    <variation>A</variation>
    <location>
        <position position="367"/>
    </location>
</feature>
<feature type="sequence conflict" description="In Ref. 1; AAA31966." evidence="4" ref="1">
    <original>L</original>
    <variation>P</variation>
    <location>
        <position position="465"/>
    </location>
</feature>
<keyword id="KW-0002">3D-structure</keyword>
<keyword id="KW-0496">Mitochondrion</keyword>
<keyword id="KW-1185">Reference proteome</keyword>
<keyword id="KW-0687">Ribonucleoprotein</keyword>
<keyword id="KW-0689">Ribosomal protein</keyword>
<gene>
    <name type="primary">var1</name>
    <name type="synonym">rms5</name>
    <name type="ORF">NCM009</name>
    <name type="ORF">NCU16005</name>
</gene>
<protein>
    <recommendedName>
        <fullName evidence="3">Small ribosomal subunit protein uS3m</fullName>
    </recommendedName>
    <alternativeName>
        <fullName>Ribosomal protein S5, mitochondrial</fullName>
    </alternativeName>
</protein>
<organism>
    <name type="scientific">Neurospora crassa (strain ATCC 24698 / 74-OR23-1A / CBS 708.71 / DSM 1257 / FGSC 987)</name>
    <dbReference type="NCBI Taxonomy" id="367110"/>
    <lineage>
        <taxon>Eukaryota</taxon>
        <taxon>Fungi</taxon>
        <taxon>Dikarya</taxon>
        <taxon>Ascomycota</taxon>
        <taxon>Pezizomycotina</taxon>
        <taxon>Sordariomycetes</taxon>
        <taxon>Sordariomycetidae</taxon>
        <taxon>Sordariales</taxon>
        <taxon>Sordariaceae</taxon>
        <taxon>Neurospora</taxon>
    </lineage>
</organism>
<name>RMAR_NEUCR</name>
<accession>P23351</accession>
<accession>M1RM66</accession>
<accession>Q9G9H5</accession>
<comment type="function">
    <text evidence="1 5">Component of the mitochondrial ribosome (mitoribosome), a dedicated translation machinery responsible for the synthesis of mitochondrial genome-encoded proteins, including at least some of the essential transmembrane subunits of the mitochondrial respiratory chain. The mitoribosomes are attached to the mitochondrial inner membrane and translation products are cotranslationally integrated into the membrane (Probable). uS3m is essential for mitochondrial protein synthesis and required for the maturation of small ribosomal subunits (By similarity).</text>
</comment>
<comment type="subunit">
    <text evidence="2">Component of the mitochondrial small ribosomal subunit (mt-SSU). Mature N.crassa 74S mitochondrial ribosomes consist of a small (37S) and a large (54S) subunit. The 37S small subunit contains a 16S ribosomal RNA (16S mt-rRNA) and 32 different proteins. The 54S large subunit contains a 23S rRNA (23S mt-rRNA) and 42 different proteins. uS3m, uS4m and uS5m form the narrow entry site of the mRNA channel.</text>
</comment>
<comment type="subcellular location">
    <subcellularLocation>
        <location evidence="2">Mitochondrion</location>
    </subcellularLocation>
</comment>
<comment type="similarity">
    <text evidence="4">Belongs to the universal ribosomal protein uS3 family.</text>
</comment>
<comment type="sequence caution" evidence="4">
    <conflict type="frameshift">
        <sequence resource="EMBL-CDS" id="AAA31966"/>
    </conflict>
</comment>